<sequence length="465" mass="53958">MTIHIYNTLTRQKEEFIPLEENKVKMYVCGPTVYNYIHIGNARPPMVFDTVRRYLEYKGYDVQYVSNFTDVDDKLIKAANELGEDVPTIADRFVEAYFEDVTALGCKHATVHPRVTENMDIIIEFIHELVNKGYAYESEGDVYFRTKEFEGYGKLSHQPIADLRHGARIEVGEKKQDPLDFALWKAAKEGEIFWESPWGQGRPGWHIECSAMARKYLGDTIDIHAGGQDLAFPHHENEIAQSEALTGKTFARYWMHNGYININNEKMSKSLGNFILVHDIIKQYDPQLIRFFMLSVHYRHPINFSEELLQSTNNGLERIKTAYGNLKHRMESSTDLTDHNEKWLADLEKFQTAFEEAMNDDFNTANAITELYNVANHANQYLLEEHTSTVVIEAYVKQLETLFDILGLELAQEELLDEEIEALIQKRIEARKNRDFALSDQIRDDLKDRNIILEDTAQGTRWKRG</sequence>
<protein>
    <recommendedName>
        <fullName evidence="1">Cysteine--tRNA ligase</fullName>
        <ecNumber evidence="1">6.1.1.16</ecNumber>
    </recommendedName>
    <alternativeName>
        <fullName evidence="1">Cysteinyl-tRNA synthetase</fullName>
        <shortName evidence="1">CysRS</shortName>
    </alternativeName>
</protein>
<reference key="1">
    <citation type="journal article" date="2007" name="J. Bacteriol.">
        <title>The complete genome sequence of Bacillus thuringiensis Al Hakam.</title>
        <authorList>
            <person name="Challacombe J.F."/>
            <person name="Altherr M.R."/>
            <person name="Xie G."/>
            <person name="Bhotika S.S."/>
            <person name="Brown N."/>
            <person name="Bruce D."/>
            <person name="Campbell C.S."/>
            <person name="Campbell M.L."/>
            <person name="Chen J."/>
            <person name="Chertkov O."/>
            <person name="Cleland C."/>
            <person name="Dimitrijevic M."/>
            <person name="Doggett N.A."/>
            <person name="Fawcett J.J."/>
            <person name="Glavina T."/>
            <person name="Goodwin L.A."/>
            <person name="Green L.D."/>
            <person name="Han C.S."/>
            <person name="Hill K.K."/>
            <person name="Hitchcock P."/>
            <person name="Jackson P.J."/>
            <person name="Keim P."/>
            <person name="Kewalramani A.R."/>
            <person name="Longmire J."/>
            <person name="Lucas S."/>
            <person name="Malfatti S."/>
            <person name="Martinez D."/>
            <person name="McMurry K."/>
            <person name="Meincke L.J."/>
            <person name="Misra M."/>
            <person name="Moseman B.L."/>
            <person name="Mundt M."/>
            <person name="Munk A.C."/>
            <person name="Okinaka R.T."/>
            <person name="Parson-Quintana B."/>
            <person name="Reilly L.P."/>
            <person name="Richardson P."/>
            <person name="Robinson D.L."/>
            <person name="Saunders E."/>
            <person name="Tapia R."/>
            <person name="Tesmer J.G."/>
            <person name="Thayer N."/>
            <person name="Thompson L.S."/>
            <person name="Tice H."/>
            <person name="Ticknor L.O."/>
            <person name="Wills P.L."/>
            <person name="Gilna P."/>
            <person name="Brettin T.S."/>
        </authorList>
    </citation>
    <scope>NUCLEOTIDE SEQUENCE [LARGE SCALE GENOMIC DNA]</scope>
    <source>
        <strain>Al Hakam</strain>
    </source>
</reference>
<proteinExistence type="inferred from homology"/>
<dbReference type="EC" id="6.1.1.16" evidence="1"/>
<dbReference type="EMBL" id="CP000485">
    <property type="protein sequence ID" value="ABK83504.1"/>
    <property type="molecule type" value="Genomic_DNA"/>
</dbReference>
<dbReference type="RefSeq" id="WP_000152249.1">
    <property type="nucleotide sequence ID" value="NC_008600.1"/>
</dbReference>
<dbReference type="SMR" id="A0R8G1"/>
<dbReference type="KEGG" id="btl:BALH_0089"/>
<dbReference type="HOGENOM" id="CLU_013528_0_1_9"/>
<dbReference type="GO" id="GO:0005829">
    <property type="term" value="C:cytosol"/>
    <property type="evidence" value="ECO:0007669"/>
    <property type="project" value="TreeGrafter"/>
</dbReference>
<dbReference type="GO" id="GO:0005524">
    <property type="term" value="F:ATP binding"/>
    <property type="evidence" value="ECO:0007669"/>
    <property type="project" value="UniProtKB-UniRule"/>
</dbReference>
<dbReference type="GO" id="GO:0004817">
    <property type="term" value="F:cysteine-tRNA ligase activity"/>
    <property type="evidence" value="ECO:0007669"/>
    <property type="project" value="UniProtKB-UniRule"/>
</dbReference>
<dbReference type="GO" id="GO:0008270">
    <property type="term" value="F:zinc ion binding"/>
    <property type="evidence" value="ECO:0007669"/>
    <property type="project" value="UniProtKB-UniRule"/>
</dbReference>
<dbReference type="GO" id="GO:0006423">
    <property type="term" value="P:cysteinyl-tRNA aminoacylation"/>
    <property type="evidence" value="ECO:0007669"/>
    <property type="project" value="UniProtKB-UniRule"/>
</dbReference>
<dbReference type="CDD" id="cd00672">
    <property type="entry name" value="CysRS_core"/>
    <property type="match status" value="1"/>
</dbReference>
<dbReference type="FunFam" id="1.20.120.1910:FF:000002">
    <property type="entry name" value="Cysteine--tRNA ligase"/>
    <property type="match status" value="1"/>
</dbReference>
<dbReference type="FunFam" id="3.40.50.620:FF:000009">
    <property type="entry name" value="Cysteine--tRNA ligase"/>
    <property type="match status" value="1"/>
</dbReference>
<dbReference type="Gene3D" id="1.20.120.1910">
    <property type="entry name" value="Cysteine-tRNA ligase, C-terminal anti-codon recognition domain"/>
    <property type="match status" value="1"/>
</dbReference>
<dbReference type="Gene3D" id="3.40.50.620">
    <property type="entry name" value="HUPs"/>
    <property type="match status" value="1"/>
</dbReference>
<dbReference type="HAMAP" id="MF_00041">
    <property type="entry name" value="Cys_tRNA_synth"/>
    <property type="match status" value="1"/>
</dbReference>
<dbReference type="InterPro" id="IPR015803">
    <property type="entry name" value="Cys-tRNA-ligase"/>
</dbReference>
<dbReference type="InterPro" id="IPR015273">
    <property type="entry name" value="Cys-tRNA-synt_Ia_DALR"/>
</dbReference>
<dbReference type="InterPro" id="IPR024909">
    <property type="entry name" value="Cys-tRNA/MSH_ligase"/>
</dbReference>
<dbReference type="InterPro" id="IPR014729">
    <property type="entry name" value="Rossmann-like_a/b/a_fold"/>
</dbReference>
<dbReference type="InterPro" id="IPR032678">
    <property type="entry name" value="tRNA-synt_1_cat_dom"/>
</dbReference>
<dbReference type="InterPro" id="IPR009080">
    <property type="entry name" value="tRNAsynth_Ia_anticodon-bd"/>
</dbReference>
<dbReference type="NCBIfam" id="TIGR00435">
    <property type="entry name" value="cysS"/>
    <property type="match status" value="1"/>
</dbReference>
<dbReference type="PANTHER" id="PTHR10890:SF3">
    <property type="entry name" value="CYSTEINE--TRNA LIGASE, CYTOPLASMIC"/>
    <property type="match status" value="1"/>
</dbReference>
<dbReference type="PANTHER" id="PTHR10890">
    <property type="entry name" value="CYSTEINYL-TRNA SYNTHETASE"/>
    <property type="match status" value="1"/>
</dbReference>
<dbReference type="Pfam" id="PF09190">
    <property type="entry name" value="DALR_2"/>
    <property type="match status" value="1"/>
</dbReference>
<dbReference type="Pfam" id="PF01406">
    <property type="entry name" value="tRNA-synt_1e"/>
    <property type="match status" value="1"/>
</dbReference>
<dbReference type="PRINTS" id="PR00983">
    <property type="entry name" value="TRNASYNTHCYS"/>
</dbReference>
<dbReference type="SMART" id="SM00840">
    <property type="entry name" value="DALR_2"/>
    <property type="match status" value="1"/>
</dbReference>
<dbReference type="SUPFAM" id="SSF47323">
    <property type="entry name" value="Anticodon-binding domain of a subclass of class I aminoacyl-tRNA synthetases"/>
    <property type="match status" value="1"/>
</dbReference>
<dbReference type="SUPFAM" id="SSF52374">
    <property type="entry name" value="Nucleotidylyl transferase"/>
    <property type="match status" value="1"/>
</dbReference>
<accession>A0R8G1</accession>
<organism>
    <name type="scientific">Bacillus thuringiensis (strain Al Hakam)</name>
    <dbReference type="NCBI Taxonomy" id="412694"/>
    <lineage>
        <taxon>Bacteria</taxon>
        <taxon>Bacillati</taxon>
        <taxon>Bacillota</taxon>
        <taxon>Bacilli</taxon>
        <taxon>Bacillales</taxon>
        <taxon>Bacillaceae</taxon>
        <taxon>Bacillus</taxon>
        <taxon>Bacillus cereus group</taxon>
    </lineage>
</organism>
<name>SYC_BACAH</name>
<gene>
    <name evidence="1" type="primary">cysS</name>
    <name type="ordered locus">BALH_0089</name>
</gene>
<comment type="catalytic activity">
    <reaction evidence="1">
        <text>tRNA(Cys) + L-cysteine + ATP = L-cysteinyl-tRNA(Cys) + AMP + diphosphate</text>
        <dbReference type="Rhea" id="RHEA:17773"/>
        <dbReference type="Rhea" id="RHEA-COMP:9661"/>
        <dbReference type="Rhea" id="RHEA-COMP:9679"/>
        <dbReference type="ChEBI" id="CHEBI:30616"/>
        <dbReference type="ChEBI" id="CHEBI:33019"/>
        <dbReference type="ChEBI" id="CHEBI:35235"/>
        <dbReference type="ChEBI" id="CHEBI:78442"/>
        <dbReference type="ChEBI" id="CHEBI:78517"/>
        <dbReference type="ChEBI" id="CHEBI:456215"/>
        <dbReference type="EC" id="6.1.1.16"/>
    </reaction>
</comment>
<comment type="cofactor">
    <cofactor evidence="1">
        <name>Zn(2+)</name>
        <dbReference type="ChEBI" id="CHEBI:29105"/>
    </cofactor>
    <text evidence="1">Binds 1 zinc ion per subunit.</text>
</comment>
<comment type="subunit">
    <text evidence="1">Monomer.</text>
</comment>
<comment type="subcellular location">
    <subcellularLocation>
        <location evidence="1">Cytoplasm</location>
    </subcellularLocation>
</comment>
<comment type="similarity">
    <text evidence="1">Belongs to the class-I aminoacyl-tRNA synthetase family.</text>
</comment>
<keyword id="KW-0030">Aminoacyl-tRNA synthetase</keyword>
<keyword id="KW-0067">ATP-binding</keyword>
<keyword id="KW-0963">Cytoplasm</keyword>
<keyword id="KW-0436">Ligase</keyword>
<keyword id="KW-0479">Metal-binding</keyword>
<keyword id="KW-0547">Nucleotide-binding</keyword>
<keyword id="KW-0597">Phosphoprotein</keyword>
<keyword id="KW-0648">Protein biosynthesis</keyword>
<keyword id="KW-0862">Zinc</keyword>
<evidence type="ECO:0000255" key="1">
    <source>
        <dbReference type="HAMAP-Rule" id="MF_00041"/>
    </source>
</evidence>
<feature type="chain" id="PRO_0000332790" description="Cysteine--tRNA ligase">
    <location>
        <begin position="1"/>
        <end position="465"/>
    </location>
</feature>
<feature type="short sequence motif" description="'HIGH' region">
    <location>
        <begin position="31"/>
        <end position="41"/>
    </location>
</feature>
<feature type="short sequence motif" description="'KMSKS' region">
    <location>
        <begin position="266"/>
        <end position="270"/>
    </location>
</feature>
<feature type="binding site" evidence="1">
    <location>
        <position position="29"/>
    </location>
    <ligand>
        <name>Zn(2+)</name>
        <dbReference type="ChEBI" id="CHEBI:29105"/>
    </ligand>
</feature>
<feature type="binding site" evidence="1">
    <location>
        <position position="209"/>
    </location>
    <ligand>
        <name>Zn(2+)</name>
        <dbReference type="ChEBI" id="CHEBI:29105"/>
    </ligand>
</feature>
<feature type="binding site" evidence="1">
    <location>
        <position position="234"/>
    </location>
    <ligand>
        <name>Zn(2+)</name>
        <dbReference type="ChEBI" id="CHEBI:29105"/>
    </ligand>
</feature>
<feature type="binding site" evidence="1">
    <location>
        <position position="238"/>
    </location>
    <ligand>
        <name>Zn(2+)</name>
        <dbReference type="ChEBI" id="CHEBI:29105"/>
    </ligand>
</feature>
<feature type="binding site" evidence="1">
    <location>
        <position position="269"/>
    </location>
    <ligand>
        <name>ATP</name>
        <dbReference type="ChEBI" id="CHEBI:30616"/>
    </ligand>
</feature>
<feature type="modified residue" description="Phosphoserine" evidence="1">
    <location>
        <position position="270"/>
    </location>
</feature>